<keyword id="KW-0489">Methyltransferase</keyword>
<keyword id="KW-1185">Reference proteome</keyword>
<keyword id="KW-0949">S-adenosyl-L-methionine</keyword>
<keyword id="KW-0808">Transferase</keyword>
<comment type="function">
    <text evidence="1">Probable S-adenosyl-L-methionine-dependent methyltransferase.</text>
</comment>
<comment type="similarity">
    <text evidence="2">Belongs to the methyltransferase superfamily. RsmH family.</text>
</comment>
<feature type="chain" id="PRO_0000308335" description="Probable methyltransferase-like protein 15 homolog">
    <location>
        <begin position="1"/>
        <end position="356"/>
    </location>
</feature>
<feature type="binding site" evidence="1">
    <location>
        <begin position="55"/>
        <end position="57"/>
    </location>
    <ligand>
        <name>S-adenosyl-L-methionine</name>
        <dbReference type="ChEBI" id="CHEBI:59789"/>
    </ligand>
</feature>
<feature type="binding site" evidence="1">
    <location>
        <position position="74"/>
    </location>
    <ligand>
        <name>S-adenosyl-L-methionine</name>
        <dbReference type="ChEBI" id="CHEBI:59789"/>
    </ligand>
</feature>
<feature type="binding site" evidence="1">
    <location>
        <position position="103"/>
    </location>
    <ligand>
        <name>S-adenosyl-L-methionine</name>
        <dbReference type="ChEBI" id="CHEBI:59789"/>
    </ligand>
</feature>
<feature type="binding site" evidence="1">
    <location>
        <position position="126"/>
    </location>
    <ligand>
        <name>S-adenosyl-L-methionine</name>
        <dbReference type="ChEBI" id="CHEBI:59789"/>
    </ligand>
</feature>
<feature type="binding site" evidence="1">
    <location>
        <position position="133"/>
    </location>
    <ligand>
        <name>S-adenosyl-L-methionine</name>
        <dbReference type="ChEBI" id="CHEBI:59789"/>
    </ligand>
</feature>
<name>MET15_DROME</name>
<dbReference type="EC" id="2.1.1.-"/>
<dbReference type="EMBL" id="AE014297">
    <property type="protein sequence ID" value="AAO41540.1"/>
    <property type="molecule type" value="Genomic_DNA"/>
</dbReference>
<dbReference type="EMBL" id="AE014297">
    <property type="protein sequence ID" value="AAX52945.1"/>
    <property type="molecule type" value="Genomic_DNA"/>
</dbReference>
<dbReference type="EMBL" id="AY051437">
    <property type="protein sequence ID" value="AAK92861.1"/>
    <property type="molecule type" value="mRNA"/>
</dbReference>
<dbReference type="RefSeq" id="NP_788632.1">
    <property type="nucleotide sequence ID" value="NM_176455.2"/>
</dbReference>
<dbReference type="SMR" id="Q9VGY5"/>
<dbReference type="FunCoup" id="Q9VGY5">
    <property type="interactions" value="646"/>
</dbReference>
<dbReference type="IntAct" id="Q9VGY5">
    <property type="interactions" value="2"/>
</dbReference>
<dbReference type="STRING" id="7227.FBpp0081744"/>
<dbReference type="PaxDb" id="7227-FBpp0081744"/>
<dbReference type="DNASU" id="41278"/>
<dbReference type="EnsemblMetazoa" id="FBtr0082267">
    <property type="protein sequence ID" value="FBpp0081744"/>
    <property type="gene ID" value="FBgn0037822"/>
</dbReference>
<dbReference type="GeneID" id="41278"/>
<dbReference type="KEGG" id="dme:Dmel_CG14683"/>
<dbReference type="UCSC" id="CG14683-RA">
    <property type="organism name" value="d. melanogaster"/>
</dbReference>
<dbReference type="AGR" id="FB:FBgn0037822"/>
<dbReference type="FlyBase" id="FBgn0037822">
    <property type="gene designation" value="CG14683"/>
</dbReference>
<dbReference type="VEuPathDB" id="VectorBase:FBgn0037822"/>
<dbReference type="eggNOG" id="KOG2782">
    <property type="taxonomic scope" value="Eukaryota"/>
</dbReference>
<dbReference type="GeneTree" id="ENSGT00390000014756"/>
<dbReference type="HOGENOM" id="CLU_038422_1_0_1"/>
<dbReference type="InParanoid" id="Q9VGY5"/>
<dbReference type="OMA" id="NPAKRTF"/>
<dbReference type="OrthoDB" id="16290at2759"/>
<dbReference type="PhylomeDB" id="Q9VGY5"/>
<dbReference type="BioGRID-ORCS" id="41278">
    <property type="hits" value="0 hits in 1 CRISPR screen"/>
</dbReference>
<dbReference type="GenomeRNAi" id="41278"/>
<dbReference type="PRO" id="PR:Q9VGY5"/>
<dbReference type="Proteomes" id="UP000000803">
    <property type="component" value="Chromosome 3R"/>
</dbReference>
<dbReference type="Bgee" id="FBgn0037822">
    <property type="expression patterns" value="Expressed in second segment of antenna (Drosophila) and 104 other cell types or tissues"/>
</dbReference>
<dbReference type="GO" id="GO:0005759">
    <property type="term" value="C:mitochondrial matrix"/>
    <property type="evidence" value="ECO:0000250"/>
    <property type="project" value="FlyBase"/>
</dbReference>
<dbReference type="GO" id="GO:0071424">
    <property type="term" value="F:rRNA (cytosine-N4-)-methyltransferase activity"/>
    <property type="evidence" value="ECO:0000250"/>
    <property type="project" value="FlyBase"/>
</dbReference>
<dbReference type="GO" id="GO:0070475">
    <property type="term" value="P:rRNA base methylation"/>
    <property type="evidence" value="ECO:0000250"/>
    <property type="project" value="FlyBase"/>
</dbReference>
<dbReference type="FunFam" id="1.10.150.170:FF:000003">
    <property type="entry name" value="Ribosomal RNA small subunit methyltransferase H"/>
    <property type="match status" value="1"/>
</dbReference>
<dbReference type="Gene3D" id="1.10.150.170">
    <property type="entry name" value="Putative methyltransferase TM0872, insert domain"/>
    <property type="match status" value="1"/>
</dbReference>
<dbReference type="Gene3D" id="3.40.50.150">
    <property type="entry name" value="Vaccinia Virus protein VP39"/>
    <property type="match status" value="1"/>
</dbReference>
<dbReference type="HAMAP" id="MF_01007">
    <property type="entry name" value="16SrRNA_methyltr_H"/>
    <property type="match status" value="1"/>
</dbReference>
<dbReference type="InterPro" id="IPR002903">
    <property type="entry name" value="RsmH"/>
</dbReference>
<dbReference type="InterPro" id="IPR023397">
    <property type="entry name" value="SAM-dep_MeTrfase_MraW_recog"/>
</dbReference>
<dbReference type="InterPro" id="IPR029063">
    <property type="entry name" value="SAM-dependent_MTases_sf"/>
</dbReference>
<dbReference type="NCBIfam" id="TIGR00006">
    <property type="entry name" value="16S rRNA (cytosine(1402)-N(4))-methyltransferase RsmH"/>
    <property type="match status" value="1"/>
</dbReference>
<dbReference type="PANTHER" id="PTHR11265:SF0">
    <property type="entry name" value="12S RRNA N4-METHYLCYTIDINE METHYLTRANSFERASE"/>
    <property type="match status" value="1"/>
</dbReference>
<dbReference type="PANTHER" id="PTHR11265">
    <property type="entry name" value="S-ADENOSYL-METHYLTRANSFERASE MRAW"/>
    <property type="match status" value="1"/>
</dbReference>
<dbReference type="Pfam" id="PF01795">
    <property type="entry name" value="Methyltransf_5"/>
    <property type="match status" value="1"/>
</dbReference>
<dbReference type="PIRSF" id="PIRSF004486">
    <property type="entry name" value="MraW"/>
    <property type="match status" value="1"/>
</dbReference>
<dbReference type="SUPFAM" id="SSF81799">
    <property type="entry name" value="Putative methyltransferase TM0872, insert domain"/>
    <property type="match status" value="1"/>
</dbReference>
<dbReference type="SUPFAM" id="SSF53335">
    <property type="entry name" value="S-adenosyl-L-methionine-dependent methyltransferases"/>
    <property type="match status" value="1"/>
</dbReference>
<sequence>MKRLLNPTRLRLDWLRRSSIDVTTAPHVPVLCDTAIEYLQPVPGGTYFDMTFGAGGHTRRLLEKCPEAKVYALDRDPLAHQLARDMSESEEFKGRLIPLLGKFSDLPKLFKEHGLAKNSVDGMLFDFGCSSMQFDEAVRGFSISRDGPLDMRMDGGHSGGVTAADVLANVEEGDLVKILRMYGEEKAAKKIARGLVDARNALFKIETTKQLADIIENIMDGGTRKDKLRRPAHSATKTFQAIRIFVNNELNEINYGMVLANEILRVDGRLVTITFHSLEDTIVKRHINGNVLAGAANALPLKYSSHYAIDEPDILESLTKKSWKQLHRHVIVPDADEVARNTRSRSAKLRAAVKTN</sequence>
<gene>
    <name type="ORF">CG14683</name>
</gene>
<evidence type="ECO:0000250" key="1"/>
<evidence type="ECO:0000305" key="2"/>
<proteinExistence type="evidence at transcript level"/>
<reference key="1">
    <citation type="journal article" date="2000" name="Science">
        <title>The genome sequence of Drosophila melanogaster.</title>
        <authorList>
            <person name="Adams M.D."/>
            <person name="Celniker S.E."/>
            <person name="Holt R.A."/>
            <person name="Evans C.A."/>
            <person name="Gocayne J.D."/>
            <person name="Amanatides P.G."/>
            <person name="Scherer S.E."/>
            <person name="Li P.W."/>
            <person name="Hoskins R.A."/>
            <person name="Galle R.F."/>
            <person name="George R.A."/>
            <person name="Lewis S.E."/>
            <person name="Richards S."/>
            <person name="Ashburner M."/>
            <person name="Henderson S.N."/>
            <person name="Sutton G.G."/>
            <person name="Wortman J.R."/>
            <person name="Yandell M.D."/>
            <person name="Zhang Q."/>
            <person name="Chen L.X."/>
            <person name="Brandon R.C."/>
            <person name="Rogers Y.-H.C."/>
            <person name="Blazej R.G."/>
            <person name="Champe M."/>
            <person name="Pfeiffer B.D."/>
            <person name="Wan K.H."/>
            <person name="Doyle C."/>
            <person name="Baxter E.G."/>
            <person name="Helt G."/>
            <person name="Nelson C.R."/>
            <person name="Miklos G.L.G."/>
            <person name="Abril J.F."/>
            <person name="Agbayani A."/>
            <person name="An H.-J."/>
            <person name="Andrews-Pfannkoch C."/>
            <person name="Baldwin D."/>
            <person name="Ballew R.M."/>
            <person name="Basu A."/>
            <person name="Baxendale J."/>
            <person name="Bayraktaroglu L."/>
            <person name="Beasley E.M."/>
            <person name="Beeson K.Y."/>
            <person name="Benos P.V."/>
            <person name="Berman B.P."/>
            <person name="Bhandari D."/>
            <person name="Bolshakov S."/>
            <person name="Borkova D."/>
            <person name="Botchan M.R."/>
            <person name="Bouck J."/>
            <person name="Brokstein P."/>
            <person name="Brottier P."/>
            <person name="Burtis K.C."/>
            <person name="Busam D.A."/>
            <person name="Butler H."/>
            <person name="Cadieu E."/>
            <person name="Center A."/>
            <person name="Chandra I."/>
            <person name="Cherry J.M."/>
            <person name="Cawley S."/>
            <person name="Dahlke C."/>
            <person name="Davenport L.B."/>
            <person name="Davies P."/>
            <person name="de Pablos B."/>
            <person name="Delcher A."/>
            <person name="Deng Z."/>
            <person name="Mays A.D."/>
            <person name="Dew I."/>
            <person name="Dietz S.M."/>
            <person name="Dodson K."/>
            <person name="Doup L.E."/>
            <person name="Downes M."/>
            <person name="Dugan-Rocha S."/>
            <person name="Dunkov B.C."/>
            <person name="Dunn P."/>
            <person name="Durbin K.J."/>
            <person name="Evangelista C.C."/>
            <person name="Ferraz C."/>
            <person name="Ferriera S."/>
            <person name="Fleischmann W."/>
            <person name="Fosler C."/>
            <person name="Gabrielian A.E."/>
            <person name="Garg N.S."/>
            <person name="Gelbart W.M."/>
            <person name="Glasser K."/>
            <person name="Glodek A."/>
            <person name="Gong F."/>
            <person name="Gorrell J.H."/>
            <person name="Gu Z."/>
            <person name="Guan P."/>
            <person name="Harris M."/>
            <person name="Harris N.L."/>
            <person name="Harvey D.A."/>
            <person name="Heiman T.J."/>
            <person name="Hernandez J.R."/>
            <person name="Houck J."/>
            <person name="Hostin D."/>
            <person name="Houston K.A."/>
            <person name="Howland T.J."/>
            <person name="Wei M.-H."/>
            <person name="Ibegwam C."/>
            <person name="Jalali M."/>
            <person name="Kalush F."/>
            <person name="Karpen G.H."/>
            <person name="Ke Z."/>
            <person name="Kennison J.A."/>
            <person name="Ketchum K.A."/>
            <person name="Kimmel B.E."/>
            <person name="Kodira C.D."/>
            <person name="Kraft C.L."/>
            <person name="Kravitz S."/>
            <person name="Kulp D."/>
            <person name="Lai Z."/>
            <person name="Lasko P."/>
            <person name="Lei Y."/>
            <person name="Levitsky A.A."/>
            <person name="Li J.H."/>
            <person name="Li Z."/>
            <person name="Liang Y."/>
            <person name="Lin X."/>
            <person name="Liu X."/>
            <person name="Mattei B."/>
            <person name="McIntosh T.C."/>
            <person name="McLeod M.P."/>
            <person name="McPherson D."/>
            <person name="Merkulov G."/>
            <person name="Milshina N.V."/>
            <person name="Mobarry C."/>
            <person name="Morris J."/>
            <person name="Moshrefi A."/>
            <person name="Mount S.M."/>
            <person name="Moy M."/>
            <person name="Murphy B."/>
            <person name="Murphy L."/>
            <person name="Muzny D.M."/>
            <person name="Nelson D.L."/>
            <person name="Nelson D.R."/>
            <person name="Nelson K.A."/>
            <person name="Nixon K."/>
            <person name="Nusskern D.R."/>
            <person name="Pacleb J.M."/>
            <person name="Palazzolo M."/>
            <person name="Pittman G.S."/>
            <person name="Pan S."/>
            <person name="Pollard J."/>
            <person name="Puri V."/>
            <person name="Reese M.G."/>
            <person name="Reinert K."/>
            <person name="Remington K."/>
            <person name="Saunders R.D.C."/>
            <person name="Scheeler F."/>
            <person name="Shen H."/>
            <person name="Shue B.C."/>
            <person name="Siden-Kiamos I."/>
            <person name="Simpson M."/>
            <person name="Skupski M.P."/>
            <person name="Smith T.J."/>
            <person name="Spier E."/>
            <person name="Spradling A.C."/>
            <person name="Stapleton M."/>
            <person name="Strong R."/>
            <person name="Sun E."/>
            <person name="Svirskas R."/>
            <person name="Tector C."/>
            <person name="Turner R."/>
            <person name="Venter E."/>
            <person name="Wang A.H."/>
            <person name="Wang X."/>
            <person name="Wang Z.-Y."/>
            <person name="Wassarman D.A."/>
            <person name="Weinstock G.M."/>
            <person name="Weissenbach J."/>
            <person name="Williams S.M."/>
            <person name="Woodage T."/>
            <person name="Worley K.C."/>
            <person name="Wu D."/>
            <person name="Yang S."/>
            <person name="Yao Q.A."/>
            <person name="Ye J."/>
            <person name="Yeh R.-F."/>
            <person name="Zaveri J.S."/>
            <person name="Zhan M."/>
            <person name="Zhang G."/>
            <person name="Zhao Q."/>
            <person name="Zheng L."/>
            <person name="Zheng X.H."/>
            <person name="Zhong F.N."/>
            <person name="Zhong W."/>
            <person name="Zhou X."/>
            <person name="Zhu S.C."/>
            <person name="Zhu X."/>
            <person name="Smith H.O."/>
            <person name="Gibbs R.A."/>
            <person name="Myers E.W."/>
            <person name="Rubin G.M."/>
            <person name="Venter J.C."/>
        </authorList>
    </citation>
    <scope>NUCLEOTIDE SEQUENCE [LARGE SCALE GENOMIC DNA]</scope>
    <source>
        <strain>Berkeley</strain>
    </source>
</reference>
<reference key="2">
    <citation type="journal article" date="2002" name="Genome Biol.">
        <title>Annotation of the Drosophila melanogaster euchromatic genome: a systematic review.</title>
        <authorList>
            <person name="Misra S."/>
            <person name="Crosby M.A."/>
            <person name="Mungall C.J."/>
            <person name="Matthews B.B."/>
            <person name="Campbell K.S."/>
            <person name="Hradecky P."/>
            <person name="Huang Y."/>
            <person name="Kaminker J.S."/>
            <person name="Millburn G.H."/>
            <person name="Prochnik S.E."/>
            <person name="Smith C.D."/>
            <person name="Tupy J.L."/>
            <person name="Whitfield E.J."/>
            <person name="Bayraktaroglu L."/>
            <person name="Berman B.P."/>
            <person name="Bettencourt B.R."/>
            <person name="Celniker S.E."/>
            <person name="de Grey A.D.N.J."/>
            <person name="Drysdale R.A."/>
            <person name="Harris N.L."/>
            <person name="Richter J."/>
            <person name="Russo S."/>
            <person name="Schroeder A.J."/>
            <person name="Shu S.Q."/>
            <person name="Stapleton M."/>
            <person name="Yamada C."/>
            <person name="Ashburner M."/>
            <person name="Gelbart W.M."/>
            <person name="Rubin G.M."/>
            <person name="Lewis S.E."/>
        </authorList>
    </citation>
    <scope>GENOME REANNOTATION</scope>
    <source>
        <strain>Berkeley</strain>
    </source>
</reference>
<reference key="3">
    <citation type="journal article" date="2002" name="Genome Biol.">
        <title>A Drosophila full-length cDNA resource.</title>
        <authorList>
            <person name="Stapleton M."/>
            <person name="Carlson J.W."/>
            <person name="Brokstein P."/>
            <person name="Yu C."/>
            <person name="Champe M."/>
            <person name="George R.A."/>
            <person name="Guarin H."/>
            <person name="Kronmiller B."/>
            <person name="Pacleb J.M."/>
            <person name="Park S."/>
            <person name="Wan K.H."/>
            <person name="Rubin G.M."/>
            <person name="Celniker S.E."/>
        </authorList>
    </citation>
    <scope>NUCLEOTIDE SEQUENCE [LARGE SCALE MRNA]</scope>
    <source>
        <strain>Berkeley</strain>
        <tissue>Head</tissue>
    </source>
</reference>
<protein>
    <recommendedName>
        <fullName>Probable methyltransferase-like protein 15 homolog</fullName>
        <ecNumber>2.1.1.-</ecNumber>
    </recommendedName>
</protein>
<organism>
    <name type="scientific">Drosophila melanogaster</name>
    <name type="common">Fruit fly</name>
    <dbReference type="NCBI Taxonomy" id="7227"/>
    <lineage>
        <taxon>Eukaryota</taxon>
        <taxon>Metazoa</taxon>
        <taxon>Ecdysozoa</taxon>
        <taxon>Arthropoda</taxon>
        <taxon>Hexapoda</taxon>
        <taxon>Insecta</taxon>
        <taxon>Pterygota</taxon>
        <taxon>Neoptera</taxon>
        <taxon>Endopterygota</taxon>
        <taxon>Diptera</taxon>
        <taxon>Brachycera</taxon>
        <taxon>Muscomorpha</taxon>
        <taxon>Ephydroidea</taxon>
        <taxon>Drosophilidae</taxon>
        <taxon>Drosophila</taxon>
        <taxon>Sophophora</taxon>
    </lineage>
</organism>
<accession>Q9VGY5</accession>